<dbReference type="EC" id="2.2.1.1"/>
<dbReference type="EMBL" id="AAFI02000009">
    <property type="protein sequence ID" value="EAL70946.1"/>
    <property type="molecule type" value="Genomic_DNA"/>
</dbReference>
<dbReference type="EMBL" id="AAFI02000011">
    <property type="protein sequence ID" value="EAL70443.1"/>
    <property type="molecule type" value="Genomic_DNA"/>
</dbReference>
<dbReference type="RefSeq" id="XP_644368.1">
    <property type="nucleotide sequence ID" value="XM_639276.1"/>
</dbReference>
<dbReference type="RefSeq" id="XP_645046.1">
    <property type="nucleotide sequence ID" value="XM_639954.1"/>
</dbReference>
<dbReference type="SMR" id="Q556J0"/>
<dbReference type="FunCoup" id="Q556J0">
    <property type="interactions" value="405"/>
</dbReference>
<dbReference type="STRING" id="44689.Q556J0"/>
<dbReference type="PaxDb" id="44689-DDB0231244"/>
<dbReference type="EnsemblProtists" id="EAL70443">
    <property type="protein sequence ID" value="EAL70443"/>
    <property type="gene ID" value="DDB_G0274019"/>
</dbReference>
<dbReference type="EnsemblProtists" id="EAL70946">
    <property type="protein sequence ID" value="EAL70946"/>
    <property type="gene ID" value="DDB_G0272618"/>
</dbReference>
<dbReference type="GeneID" id="8618722"/>
<dbReference type="GeneID" id="8619254"/>
<dbReference type="KEGG" id="ddi:DDB_G0272618"/>
<dbReference type="KEGG" id="ddi:DDB_G0274019"/>
<dbReference type="dictyBase" id="DDB_G0272618">
    <property type="gene designation" value="tkt-1"/>
</dbReference>
<dbReference type="dictyBase" id="DDB_G0274019">
    <property type="gene designation" value="tkt-2"/>
</dbReference>
<dbReference type="VEuPathDB" id="AmoebaDB:DDB_G0274019"/>
<dbReference type="eggNOG" id="KOG0523">
    <property type="taxonomic scope" value="Eukaryota"/>
</dbReference>
<dbReference type="HOGENOM" id="CLU_009227_0_0_1"/>
<dbReference type="InParanoid" id="Q556J0"/>
<dbReference type="OMA" id="EWTTGNL"/>
<dbReference type="PhylomeDB" id="Q556J0"/>
<dbReference type="PRO" id="PR:Q556J0"/>
<dbReference type="Proteomes" id="UP000002195">
    <property type="component" value="Chromosome 2"/>
</dbReference>
<dbReference type="GO" id="GO:0005829">
    <property type="term" value="C:cytosol"/>
    <property type="evidence" value="ECO:0000314"/>
    <property type="project" value="dictyBase"/>
</dbReference>
<dbReference type="GO" id="GO:0045335">
    <property type="term" value="C:phagocytic vesicle"/>
    <property type="evidence" value="ECO:0007005"/>
    <property type="project" value="dictyBase"/>
</dbReference>
<dbReference type="GO" id="GO:0046872">
    <property type="term" value="F:metal ion binding"/>
    <property type="evidence" value="ECO:0007669"/>
    <property type="project" value="UniProtKB-KW"/>
</dbReference>
<dbReference type="GO" id="GO:0004802">
    <property type="term" value="F:transketolase activity"/>
    <property type="evidence" value="ECO:0000250"/>
    <property type="project" value="dictyBase"/>
</dbReference>
<dbReference type="GO" id="GO:0006098">
    <property type="term" value="P:pentose-phosphate shunt"/>
    <property type="evidence" value="ECO:0000250"/>
    <property type="project" value="dictyBase"/>
</dbReference>
<dbReference type="CDD" id="cd07033">
    <property type="entry name" value="TPP_PYR_DXS_TK_like"/>
    <property type="match status" value="1"/>
</dbReference>
<dbReference type="CDD" id="cd02012">
    <property type="entry name" value="TPP_TK"/>
    <property type="match status" value="1"/>
</dbReference>
<dbReference type="FunFam" id="3.40.50.920:FF:000003">
    <property type="entry name" value="Transketolase"/>
    <property type="match status" value="1"/>
</dbReference>
<dbReference type="FunFam" id="3.40.50.970:FF:000004">
    <property type="entry name" value="Transketolase"/>
    <property type="match status" value="1"/>
</dbReference>
<dbReference type="FunFam" id="3.40.50.970:FF:000076">
    <property type="entry name" value="Transketolase"/>
    <property type="match status" value="1"/>
</dbReference>
<dbReference type="Gene3D" id="3.40.50.920">
    <property type="match status" value="1"/>
</dbReference>
<dbReference type="Gene3D" id="3.40.50.970">
    <property type="match status" value="2"/>
</dbReference>
<dbReference type="InterPro" id="IPR029061">
    <property type="entry name" value="THDP-binding"/>
</dbReference>
<dbReference type="InterPro" id="IPR009014">
    <property type="entry name" value="Transketo_C/PFOR_II"/>
</dbReference>
<dbReference type="InterPro" id="IPR055152">
    <property type="entry name" value="Transketolase-like_C_2"/>
</dbReference>
<dbReference type="InterPro" id="IPR005475">
    <property type="entry name" value="Transketolase-like_Pyr-bd"/>
</dbReference>
<dbReference type="InterPro" id="IPR005478">
    <property type="entry name" value="Transketolase_bac-like"/>
</dbReference>
<dbReference type="InterPro" id="IPR020826">
    <property type="entry name" value="Transketolase_BS"/>
</dbReference>
<dbReference type="InterPro" id="IPR049557">
    <property type="entry name" value="Transketolase_CS"/>
</dbReference>
<dbReference type="InterPro" id="IPR033247">
    <property type="entry name" value="Transketolase_fam"/>
</dbReference>
<dbReference type="InterPro" id="IPR005474">
    <property type="entry name" value="Transketolase_N"/>
</dbReference>
<dbReference type="NCBIfam" id="TIGR00232">
    <property type="entry name" value="tktlase_bact"/>
    <property type="match status" value="1"/>
</dbReference>
<dbReference type="PANTHER" id="PTHR43522">
    <property type="entry name" value="TRANSKETOLASE"/>
    <property type="match status" value="1"/>
</dbReference>
<dbReference type="PANTHER" id="PTHR43522:SF10">
    <property type="entry name" value="TRANSKETOLASE"/>
    <property type="match status" value="1"/>
</dbReference>
<dbReference type="Pfam" id="PF02779">
    <property type="entry name" value="Transket_pyr"/>
    <property type="match status" value="1"/>
</dbReference>
<dbReference type="Pfam" id="PF22613">
    <property type="entry name" value="Transketolase_C_1"/>
    <property type="match status" value="1"/>
</dbReference>
<dbReference type="Pfam" id="PF00456">
    <property type="entry name" value="Transketolase_N"/>
    <property type="match status" value="1"/>
</dbReference>
<dbReference type="SMART" id="SM00861">
    <property type="entry name" value="Transket_pyr"/>
    <property type="match status" value="1"/>
</dbReference>
<dbReference type="SUPFAM" id="SSF52518">
    <property type="entry name" value="Thiamin diphosphate-binding fold (THDP-binding)"/>
    <property type="match status" value="2"/>
</dbReference>
<dbReference type="SUPFAM" id="SSF52922">
    <property type="entry name" value="TK C-terminal domain-like"/>
    <property type="match status" value="1"/>
</dbReference>
<dbReference type="PROSITE" id="PS00801">
    <property type="entry name" value="TRANSKETOLASE_1"/>
    <property type="match status" value="1"/>
</dbReference>
<dbReference type="PROSITE" id="PS00802">
    <property type="entry name" value="TRANSKETOLASE_2"/>
    <property type="match status" value="1"/>
</dbReference>
<organism>
    <name type="scientific">Dictyostelium discoideum</name>
    <name type="common">Social amoeba</name>
    <dbReference type="NCBI Taxonomy" id="44689"/>
    <lineage>
        <taxon>Eukaryota</taxon>
        <taxon>Amoebozoa</taxon>
        <taxon>Evosea</taxon>
        <taxon>Eumycetozoa</taxon>
        <taxon>Dictyostelia</taxon>
        <taxon>Dictyosteliales</taxon>
        <taxon>Dictyosteliaceae</taxon>
        <taxon>Dictyostelium</taxon>
    </lineage>
</organism>
<comment type="function">
    <text evidence="1">Catalyzes the transfer of a two-carbon ketol group from a ketose donor to an aldose acceptor, via a covalent intermediate with the cofactor thiamine pyrophosphate.</text>
</comment>
<comment type="catalytic activity">
    <reaction>
        <text>D-sedoheptulose 7-phosphate + D-glyceraldehyde 3-phosphate = aldehydo-D-ribose 5-phosphate + D-xylulose 5-phosphate</text>
        <dbReference type="Rhea" id="RHEA:10508"/>
        <dbReference type="ChEBI" id="CHEBI:57483"/>
        <dbReference type="ChEBI" id="CHEBI:57737"/>
        <dbReference type="ChEBI" id="CHEBI:58273"/>
        <dbReference type="ChEBI" id="CHEBI:59776"/>
        <dbReference type="EC" id="2.2.1.1"/>
    </reaction>
</comment>
<comment type="cofactor">
    <cofactor evidence="1">
        <name>Mg(2+)</name>
        <dbReference type="ChEBI" id="CHEBI:18420"/>
    </cofactor>
    <cofactor evidence="1">
        <name>Ca(2+)</name>
        <dbReference type="ChEBI" id="CHEBI:29108"/>
    </cofactor>
    <cofactor evidence="1">
        <name>Mn(2+)</name>
        <dbReference type="ChEBI" id="CHEBI:29035"/>
    </cofactor>
    <cofactor evidence="1">
        <name>Co(2+)</name>
        <dbReference type="ChEBI" id="CHEBI:48828"/>
    </cofactor>
    <text evidence="1">Binds 1 Mg(2+) ion per subunit. Can also utilize other divalent metal cations, such as Ca(2+), Mn(2+) and Co(2+).</text>
</comment>
<comment type="cofactor">
    <cofactor evidence="1">
        <name>thiamine diphosphate</name>
        <dbReference type="ChEBI" id="CHEBI:58937"/>
    </cofactor>
    <text evidence="1">Binds 1 thiamine pyrophosphate per subunit.</text>
</comment>
<comment type="subunit">
    <text evidence="1">Homodimer.</text>
</comment>
<comment type="similarity">
    <text evidence="3">Belongs to the transketolase family.</text>
</comment>
<comment type="caution">
    <text evidence="3">The gene for this protein is duplicated in strains AX3 and AX4. These strains contain a duplication of a segment of 750 kb of chromosome 2 compared to the corresponding sequence in strain AX2.</text>
</comment>
<keyword id="KW-0007">Acetylation</keyword>
<keyword id="KW-0106">Calcium</keyword>
<keyword id="KW-0903">Direct protein sequencing</keyword>
<keyword id="KW-0460">Magnesium</keyword>
<keyword id="KW-0479">Metal-binding</keyword>
<keyword id="KW-1185">Reference proteome</keyword>
<keyword id="KW-0786">Thiamine pyrophosphate</keyword>
<keyword id="KW-0808">Transferase</keyword>
<accession>Q556J0</accession>
<accession>Q86K10</accession>
<protein>
    <recommendedName>
        <fullName>Transketolase</fullName>
        <shortName>TK</shortName>
        <ecNumber>2.2.1.1</ecNumber>
    </recommendedName>
</protein>
<proteinExistence type="evidence at protein level"/>
<name>TKT_DICDI</name>
<feature type="initiator methionine" description="Removed" evidence="2">
    <location>
        <position position="1"/>
    </location>
</feature>
<feature type="chain" id="PRO_0000331220" description="Transketolase">
    <location>
        <begin position="2"/>
        <end position="661"/>
    </location>
</feature>
<feature type="active site" description="Proton donor" evidence="1">
    <location>
        <position position="413"/>
    </location>
</feature>
<feature type="binding site" evidence="1">
    <location>
        <position position="31"/>
    </location>
    <ligand>
        <name>substrate</name>
    </ligand>
</feature>
<feature type="binding site" evidence="1">
    <location>
        <position position="71"/>
    </location>
    <ligand>
        <name>thiamine diphosphate</name>
        <dbReference type="ChEBI" id="CHEBI:58937"/>
    </ligand>
</feature>
<feature type="binding site" evidence="1">
    <location>
        <begin position="119"/>
        <end position="121"/>
    </location>
    <ligand>
        <name>thiamine diphosphate</name>
        <dbReference type="ChEBI" id="CHEBI:58937"/>
    </ligand>
</feature>
<feature type="binding site" evidence="1">
    <location>
        <position position="160"/>
    </location>
    <ligand>
        <name>Mg(2+)</name>
        <dbReference type="ChEBI" id="CHEBI:18420"/>
    </ligand>
</feature>
<feature type="binding site" evidence="1">
    <location>
        <position position="161"/>
    </location>
    <ligand>
        <name>thiamine diphosphate</name>
        <dbReference type="ChEBI" id="CHEBI:58937"/>
    </ligand>
</feature>
<feature type="binding site" evidence="1">
    <location>
        <position position="190"/>
    </location>
    <ligand>
        <name>Mg(2+)</name>
        <dbReference type="ChEBI" id="CHEBI:18420"/>
    </ligand>
</feature>
<feature type="binding site" evidence="1">
    <location>
        <position position="190"/>
    </location>
    <ligand>
        <name>thiamine diphosphate</name>
        <dbReference type="ChEBI" id="CHEBI:58937"/>
    </ligand>
</feature>
<feature type="binding site" evidence="1">
    <location>
        <position position="192"/>
    </location>
    <ligand>
        <name>Mg(2+)</name>
        <dbReference type="ChEBI" id="CHEBI:18420"/>
    </ligand>
</feature>
<feature type="binding site" evidence="1">
    <location>
        <position position="267"/>
    </location>
    <ligand>
        <name>substrate</name>
    </ligand>
</feature>
<feature type="binding site" evidence="1">
    <location>
        <position position="267"/>
    </location>
    <ligand>
        <name>thiamine diphosphate</name>
        <dbReference type="ChEBI" id="CHEBI:58937"/>
    </ligand>
</feature>
<feature type="binding site" evidence="1">
    <location>
        <position position="359"/>
    </location>
    <ligand>
        <name>substrate</name>
    </ligand>
</feature>
<feature type="binding site" evidence="1">
    <location>
        <position position="386"/>
    </location>
    <ligand>
        <name>substrate</name>
    </ligand>
</feature>
<feature type="binding site" evidence="1">
    <location>
        <position position="439"/>
    </location>
    <ligand>
        <name>thiamine diphosphate</name>
        <dbReference type="ChEBI" id="CHEBI:58937"/>
    </ligand>
</feature>
<feature type="binding site" evidence="1">
    <location>
        <position position="463"/>
    </location>
    <ligand>
        <name>substrate</name>
    </ligand>
</feature>
<feature type="binding site" evidence="1">
    <location>
        <position position="471"/>
    </location>
    <ligand>
        <name>substrate</name>
    </ligand>
</feature>
<feature type="binding site" evidence="1">
    <location>
        <position position="522"/>
    </location>
    <ligand>
        <name>substrate</name>
    </ligand>
</feature>
<feature type="site" description="Important for catalytic activity" evidence="1">
    <location>
        <position position="31"/>
    </location>
</feature>
<feature type="site" description="Important for catalytic activity" evidence="1">
    <location>
        <position position="267"/>
    </location>
</feature>
<feature type="modified residue" description="N-acetylserine" evidence="2">
    <location>
        <position position="2"/>
    </location>
</feature>
<reference key="1">
    <citation type="journal article" date="2002" name="Nature">
        <title>Sequence and analysis of chromosome 2 of Dictyostelium discoideum.</title>
        <authorList>
            <person name="Gloeckner G."/>
            <person name="Eichinger L."/>
            <person name="Szafranski K."/>
            <person name="Pachebat J.A."/>
            <person name="Bankier A.T."/>
            <person name="Dear P.H."/>
            <person name="Lehmann R."/>
            <person name="Baumgart C."/>
            <person name="Parra G."/>
            <person name="Abril J.F."/>
            <person name="Guigo R."/>
            <person name="Kumpf K."/>
            <person name="Tunggal B."/>
            <person name="Cox E.C."/>
            <person name="Quail M.A."/>
            <person name="Platzer M."/>
            <person name="Rosenthal A."/>
            <person name="Noegel A.A."/>
        </authorList>
    </citation>
    <scope>NUCLEOTIDE SEQUENCE [LARGE SCALE GENOMIC DNA]</scope>
    <source>
        <strain>AX4</strain>
    </source>
</reference>
<reference key="2">
    <citation type="journal article" date="2005" name="Nature">
        <title>The genome of the social amoeba Dictyostelium discoideum.</title>
        <authorList>
            <person name="Eichinger L."/>
            <person name="Pachebat J.A."/>
            <person name="Gloeckner G."/>
            <person name="Rajandream M.A."/>
            <person name="Sucgang R."/>
            <person name="Berriman M."/>
            <person name="Song J."/>
            <person name="Olsen R."/>
            <person name="Szafranski K."/>
            <person name="Xu Q."/>
            <person name="Tunggal B."/>
            <person name="Kummerfeld S."/>
            <person name="Madera M."/>
            <person name="Konfortov B.A."/>
            <person name="Rivero F."/>
            <person name="Bankier A.T."/>
            <person name="Lehmann R."/>
            <person name="Hamlin N."/>
            <person name="Davies R."/>
            <person name="Gaudet P."/>
            <person name="Fey P."/>
            <person name="Pilcher K."/>
            <person name="Chen G."/>
            <person name="Saunders D."/>
            <person name="Sodergren E.J."/>
            <person name="Davis P."/>
            <person name="Kerhornou A."/>
            <person name="Nie X."/>
            <person name="Hall N."/>
            <person name="Anjard C."/>
            <person name="Hemphill L."/>
            <person name="Bason N."/>
            <person name="Farbrother P."/>
            <person name="Desany B."/>
            <person name="Just E."/>
            <person name="Morio T."/>
            <person name="Rost R."/>
            <person name="Churcher C.M."/>
            <person name="Cooper J."/>
            <person name="Haydock S."/>
            <person name="van Driessche N."/>
            <person name="Cronin A."/>
            <person name="Goodhead I."/>
            <person name="Muzny D.M."/>
            <person name="Mourier T."/>
            <person name="Pain A."/>
            <person name="Lu M."/>
            <person name="Harper D."/>
            <person name="Lindsay R."/>
            <person name="Hauser H."/>
            <person name="James K.D."/>
            <person name="Quiles M."/>
            <person name="Madan Babu M."/>
            <person name="Saito T."/>
            <person name="Buchrieser C."/>
            <person name="Wardroper A."/>
            <person name="Felder M."/>
            <person name="Thangavelu M."/>
            <person name="Johnson D."/>
            <person name="Knights A."/>
            <person name="Loulseged H."/>
            <person name="Mungall K.L."/>
            <person name="Oliver K."/>
            <person name="Price C."/>
            <person name="Quail M.A."/>
            <person name="Urushihara H."/>
            <person name="Hernandez J."/>
            <person name="Rabbinowitsch E."/>
            <person name="Steffen D."/>
            <person name="Sanders M."/>
            <person name="Ma J."/>
            <person name="Kohara Y."/>
            <person name="Sharp S."/>
            <person name="Simmonds M.N."/>
            <person name="Spiegler S."/>
            <person name="Tivey A."/>
            <person name="Sugano S."/>
            <person name="White B."/>
            <person name="Walker D."/>
            <person name="Woodward J.R."/>
            <person name="Winckler T."/>
            <person name="Tanaka Y."/>
            <person name="Shaulsky G."/>
            <person name="Schleicher M."/>
            <person name="Weinstock G.M."/>
            <person name="Rosenthal A."/>
            <person name="Cox E.C."/>
            <person name="Chisholm R.L."/>
            <person name="Gibbs R.A."/>
            <person name="Loomis W.F."/>
            <person name="Platzer M."/>
            <person name="Kay R.R."/>
            <person name="Williams J.G."/>
            <person name="Dear P.H."/>
            <person name="Noegel A.A."/>
            <person name="Barrell B.G."/>
            <person name="Kuspa A."/>
        </authorList>
    </citation>
    <scope>NUCLEOTIDE SEQUENCE [LARGE SCALE GENOMIC DNA]</scope>
    <source>
        <strain>AX4</strain>
    </source>
</reference>
<reference key="3">
    <citation type="submission" date="2009-07" db="UniProtKB">
        <authorList>
            <person name="Bienvenut W.V."/>
            <person name="Ura S."/>
            <person name="Insall R.H."/>
        </authorList>
    </citation>
    <scope>PROTEIN SEQUENCE OF 2-11; 256-273; 512-522 AND 573-579</scope>
    <scope>CLEAVAGE OF INITIATOR METHIONINE</scope>
    <scope>ACETYLATION AT SER-2</scope>
    <scope>IDENTIFICATION BY MASS SPECTROMETRY</scope>
    <source>
        <strain>AX2</strain>
    </source>
</reference>
<reference key="4">
    <citation type="journal article" date="2006" name="Mol. Cell. Proteomics">
        <title>Proteomics fingerprinting of phagosome maturation and evidence for the role of a Galpha during uptake.</title>
        <authorList>
            <person name="Gotthardt D."/>
            <person name="Blancheteau V."/>
            <person name="Bosserhoff A."/>
            <person name="Ruppert T."/>
            <person name="Delorenzi M."/>
            <person name="Soldati T."/>
        </authorList>
    </citation>
    <scope>IDENTIFICATION BY MASS SPECTROMETRY [LARGE SCALE ANALYSIS]</scope>
    <source>
        <strain>AX2</strain>
    </source>
</reference>
<gene>
    <name type="primary">tkt-1</name>
    <name type="ORF">DDB_G0272618</name>
</gene>
<gene>
    <name type="primary">tkt-2</name>
    <name type="ORF">DDB_G0274019</name>
</gene>
<evidence type="ECO:0000250" key="1"/>
<evidence type="ECO:0000269" key="2">
    <source ref="3"/>
</evidence>
<evidence type="ECO:0000305" key="3"/>
<sequence>MSNIDFKALERAANETRGLSMDAVAKAASGHLGLPLGSAEIGAALFGNSLIYNPKDTRWLNRDYFVLSAGHGSMFLYSWLHLSGYDVSIEDIKNFRQLNSKTPGHPKFHDTPGVEATTGPLGQGIANAVGIASACKMAAGKFNTEQHQIFNQKVVVLVGDGCLQEGISQEAISFAGHHRLDNLIVFYDSNDVTLDAMAIETQSEDAVKRFESVGFEVQLVLEGNNIGSLINAYQNAKHSKSGKPQIIICKTTIAKGIPEVAGTNKGHGEAGVKFIDSARKNLGLPEEKFFVSGETRQYFEQHEKQLEKLYQEWQATFAEWKSANPKLAQLLESAHEKHEAIDIMKQIPEFPTTPIIATRKAGSDVLQPISQYLPLSVSGSADLHGSTLNYIKEGRDFTPACPTGRNIKFGIREHAMGAMMNGIAYHGLFKVSGATFLVFSDYLRPAIRLAALSHLPVVYIFTHDSVGVGEDGPTHQPVETVSGLRMIPNLDVIRPADPEETAAAFSLAYARADGPTLLSLTRQNLPFLPGTAQKKREGTLRGGYIVVSETAPLRMILIATGSEVQHCVEAAKLLGDDIRVVSMPCTELFDRQSNEYKQSVLPSGCRNRIAMEAGVTSFWYKYVGLDGKVIGIDRFGMSAPGNAVMKQLGMTSENLVNISKQ</sequence>